<comment type="function">
    <text evidence="1">One of the essential components for the initiation of protein synthesis. Stabilizes the binding of IF-2 and IF-3 on the 30S subunit to which N-formylmethionyl-tRNA(fMet) subsequently binds. Helps modulate mRNA selection, yielding the 30S pre-initiation complex (PIC). Upon addition of the 50S ribosomal subunit IF-1, IF-2 and IF-3 are released leaving the mature 70S translation initiation complex.</text>
</comment>
<comment type="subunit">
    <text evidence="1">Component of the 30S ribosomal translation pre-initiation complex which assembles on the 30S ribosome in the order IF-2 and IF-3, IF-1 and N-formylmethionyl-tRNA(fMet); mRNA recruitment can occur at any time during PIC assembly.</text>
</comment>
<comment type="subcellular location">
    <subcellularLocation>
        <location evidence="1">Cytoplasm</location>
    </subcellularLocation>
</comment>
<comment type="similarity">
    <text evidence="1">Belongs to the IF-1 family.</text>
</comment>
<keyword id="KW-0963">Cytoplasm</keyword>
<keyword id="KW-0396">Initiation factor</keyword>
<keyword id="KW-0648">Protein biosynthesis</keyword>
<keyword id="KW-1185">Reference proteome</keyword>
<keyword id="KW-0694">RNA-binding</keyword>
<keyword id="KW-0699">rRNA-binding</keyword>
<sequence>MAKEDVIEVEGTVTEALPNTQFRVELDNGHNVLAHISGKMRMNYIRILPGDRVKVELSPYDLSRGRITYRYRS</sequence>
<proteinExistence type="inferred from homology"/>
<name>IF1_RUBXD</name>
<gene>
    <name evidence="1" type="primary">infA</name>
    <name type="ordered locus">Rxyl_2132</name>
</gene>
<dbReference type="EMBL" id="CP000386">
    <property type="protein sequence ID" value="ABG05076.1"/>
    <property type="molecule type" value="Genomic_DNA"/>
</dbReference>
<dbReference type="RefSeq" id="WP_011565091.1">
    <property type="nucleotide sequence ID" value="NC_008148.1"/>
</dbReference>
<dbReference type="SMR" id="Q1AU52"/>
<dbReference type="STRING" id="266117.Rxyl_2132"/>
<dbReference type="KEGG" id="rxy:Rxyl_2132"/>
<dbReference type="eggNOG" id="COG0361">
    <property type="taxonomic scope" value="Bacteria"/>
</dbReference>
<dbReference type="HOGENOM" id="CLU_151267_1_0_11"/>
<dbReference type="OrthoDB" id="9803250at2"/>
<dbReference type="PhylomeDB" id="Q1AU52"/>
<dbReference type="Proteomes" id="UP000006637">
    <property type="component" value="Chromosome"/>
</dbReference>
<dbReference type="GO" id="GO:0005829">
    <property type="term" value="C:cytosol"/>
    <property type="evidence" value="ECO:0007669"/>
    <property type="project" value="TreeGrafter"/>
</dbReference>
<dbReference type="GO" id="GO:0043022">
    <property type="term" value="F:ribosome binding"/>
    <property type="evidence" value="ECO:0007669"/>
    <property type="project" value="UniProtKB-UniRule"/>
</dbReference>
<dbReference type="GO" id="GO:0019843">
    <property type="term" value="F:rRNA binding"/>
    <property type="evidence" value="ECO:0007669"/>
    <property type="project" value="UniProtKB-UniRule"/>
</dbReference>
<dbReference type="GO" id="GO:0003743">
    <property type="term" value="F:translation initiation factor activity"/>
    <property type="evidence" value="ECO:0007669"/>
    <property type="project" value="UniProtKB-UniRule"/>
</dbReference>
<dbReference type="CDD" id="cd04451">
    <property type="entry name" value="S1_IF1"/>
    <property type="match status" value="1"/>
</dbReference>
<dbReference type="FunFam" id="2.40.50.140:FF:000002">
    <property type="entry name" value="Translation initiation factor IF-1"/>
    <property type="match status" value="1"/>
</dbReference>
<dbReference type="Gene3D" id="2.40.50.140">
    <property type="entry name" value="Nucleic acid-binding proteins"/>
    <property type="match status" value="1"/>
</dbReference>
<dbReference type="HAMAP" id="MF_00075">
    <property type="entry name" value="IF_1"/>
    <property type="match status" value="1"/>
</dbReference>
<dbReference type="InterPro" id="IPR012340">
    <property type="entry name" value="NA-bd_OB-fold"/>
</dbReference>
<dbReference type="InterPro" id="IPR006196">
    <property type="entry name" value="RNA-binding_domain_S1_IF1"/>
</dbReference>
<dbReference type="InterPro" id="IPR003029">
    <property type="entry name" value="S1_domain"/>
</dbReference>
<dbReference type="InterPro" id="IPR004368">
    <property type="entry name" value="TIF_IF1"/>
</dbReference>
<dbReference type="NCBIfam" id="TIGR00008">
    <property type="entry name" value="infA"/>
    <property type="match status" value="1"/>
</dbReference>
<dbReference type="PANTHER" id="PTHR33370">
    <property type="entry name" value="TRANSLATION INITIATION FACTOR IF-1, CHLOROPLASTIC"/>
    <property type="match status" value="1"/>
</dbReference>
<dbReference type="PANTHER" id="PTHR33370:SF1">
    <property type="entry name" value="TRANSLATION INITIATION FACTOR IF-1, CHLOROPLASTIC"/>
    <property type="match status" value="1"/>
</dbReference>
<dbReference type="Pfam" id="PF01176">
    <property type="entry name" value="eIF-1a"/>
    <property type="match status" value="1"/>
</dbReference>
<dbReference type="SMART" id="SM00316">
    <property type="entry name" value="S1"/>
    <property type="match status" value="1"/>
</dbReference>
<dbReference type="SUPFAM" id="SSF50249">
    <property type="entry name" value="Nucleic acid-binding proteins"/>
    <property type="match status" value="1"/>
</dbReference>
<dbReference type="PROSITE" id="PS50832">
    <property type="entry name" value="S1_IF1_TYPE"/>
    <property type="match status" value="1"/>
</dbReference>
<accession>Q1AU52</accession>
<reference key="1">
    <citation type="submission" date="2006-06" db="EMBL/GenBank/DDBJ databases">
        <title>Complete sequence of Rubrobacter xylanophilus DSM 9941.</title>
        <authorList>
            <consortium name="US DOE Joint Genome Institute"/>
            <person name="Copeland A."/>
            <person name="Lucas S."/>
            <person name="Lapidus A."/>
            <person name="Barry K."/>
            <person name="Detter J.C."/>
            <person name="Glavina del Rio T."/>
            <person name="Hammon N."/>
            <person name="Israni S."/>
            <person name="Dalin E."/>
            <person name="Tice H."/>
            <person name="Pitluck S."/>
            <person name="Munk A.C."/>
            <person name="Brettin T."/>
            <person name="Bruce D."/>
            <person name="Han C."/>
            <person name="Tapia R."/>
            <person name="Gilna P."/>
            <person name="Schmutz J."/>
            <person name="Larimer F."/>
            <person name="Land M."/>
            <person name="Hauser L."/>
            <person name="Kyrpides N."/>
            <person name="Lykidis A."/>
            <person name="da Costa M.S."/>
            <person name="Rainey F.A."/>
            <person name="Empadinhas N."/>
            <person name="Jolivet E."/>
            <person name="Battista J.R."/>
            <person name="Richardson P."/>
        </authorList>
    </citation>
    <scope>NUCLEOTIDE SEQUENCE [LARGE SCALE GENOMIC DNA]</scope>
    <source>
        <strain>DSM 9941 / JCM 11954 / NBRC 16129 / PRD-1</strain>
    </source>
</reference>
<evidence type="ECO:0000255" key="1">
    <source>
        <dbReference type="HAMAP-Rule" id="MF_00075"/>
    </source>
</evidence>
<organism>
    <name type="scientific">Rubrobacter xylanophilus (strain DSM 9941 / JCM 11954 / NBRC 16129 / PRD-1)</name>
    <dbReference type="NCBI Taxonomy" id="266117"/>
    <lineage>
        <taxon>Bacteria</taxon>
        <taxon>Bacillati</taxon>
        <taxon>Actinomycetota</taxon>
        <taxon>Rubrobacteria</taxon>
        <taxon>Rubrobacterales</taxon>
        <taxon>Rubrobacteraceae</taxon>
        <taxon>Rubrobacter</taxon>
    </lineage>
</organism>
<protein>
    <recommendedName>
        <fullName evidence="1">Translation initiation factor IF-1</fullName>
    </recommendedName>
</protein>
<feature type="chain" id="PRO_0000263863" description="Translation initiation factor IF-1">
    <location>
        <begin position="1"/>
        <end position="73"/>
    </location>
</feature>
<feature type="domain" description="S1-like" evidence="1">
    <location>
        <begin position="1"/>
        <end position="72"/>
    </location>
</feature>